<reference key="1">
    <citation type="submission" date="2006-12" db="EMBL/GenBank/DDBJ databases">
        <authorList>
            <person name="Hendrix L."/>
            <person name="Mohamoud Y."/>
            <person name="Radune D."/>
            <person name="Shvartsbeyn A."/>
            <person name="Daugherty S."/>
            <person name="Dodson R."/>
            <person name="Durkin A.S."/>
            <person name="Harkins D."/>
            <person name="Huot H."/>
            <person name="Kothari S.P."/>
            <person name="Madupu R."/>
            <person name="Li J."/>
            <person name="Nelson W.C."/>
            <person name="Shrivastava S."/>
            <person name="Giglio M.G."/>
            <person name="Haft D."/>
            <person name="Selengut J."/>
            <person name="Fraser-Ligget C."/>
            <person name="Seshadri R."/>
        </authorList>
    </citation>
    <scope>NUCLEOTIDE SEQUENCE [LARGE SCALE GENOMIC DNA]</scope>
    <source>
        <strain>ATCC 35685 / KC583 / Herrer 020/F12,63</strain>
    </source>
</reference>
<dbReference type="EMBL" id="CP000524">
    <property type="protein sequence ID" value="ABM45293.1"/>
    <property type="molecule type" value="Genomic_DNA"/>
</dbReference>
<dbReference type="RefSeq" id="WP_005766951.1">
    <property type="nucleotide sequence ID" value="NC_008783.1"/>
</dbReference>
<dbReference type="SMR" id="A1USR3"/>
<dbReference type="STRING" id="360095.BARBAKC583_0717"/>
<dbReference type="GeneID" id="4684606"/>
<dbReference type="KEGG" id="bbk:BARBAKC583_0717"/>
<dbReference type="PATRIC" id="fig|360095.6.peg.696"/>
<dbReference type="eggNOG" id="COG0200">
    <property type="taxonomic scope" value="Bacteria"/>
</dbReference>
<dbReference type="HOGENOM" id="CLU_055188_4_0_5"/>
<dbReference type="OrthoDB" id="9810293at2"/>
<dbReference type="Proteomes" id="UP000000643">
    <property type="component" value="Chromosome"/>
</dbReference>
<dbReference type="GO" id="GO:0022625">
    <property type="term" value="C:cytosolic large ribosomal subunit"/>
    <property type="evidence" value="ECO:0007669"/>
    <property type="project" value="TreeGrafter"/>
</dbReference>
<dbReference type="GO" id="GO:0019843">
    <property type="term" value="F:rRNA binding"/>
    <property type="evidence" value="ECO:0007669"/>
    <property type="project" value="UniProtKB-UniRule"/>
</dbReference>
<dbReference type="GO" id="GO:0003735">
    <property type="term" value="F:structural constituent of ribosome"/>
    <property type="evidence" value="ECO:0007669"/>
    <property type="project" value="InterPro"/>
</dbReference>
<dbReference type="GO" id="GO:0006412">
    <property type="term" value="P:translation"/>
    <property type="evidence" value="ECO:0007669"/>
    <property type="project" value="UniProtKB-UniRule"/>
</dbReference>
<dbReference type="Gene3D" id="3.100.10.10">
    <property type="match status" value="1"/>
</dbReference>
<dbReference type="HAMAP" id="MF_01341">
    <property type="entry name" value="Ribosomal_uL15"/>
    <property type="match status" value="1"/>
</dbReference>
<dbReference type="InterPro" id="IPR030878">
    <property type="entry name" value="Ribosomal_uL15"/>
</dbReference>
<dbReference type="InterPro" id="IPR021131">
    <property type="entry name" value="Ribosomal_uL15/eL18"/>
</dbReference>
<dbReference type="InterPro" id="IPR036227">
    <property type="entry name" value="Ribosomal_uL15/eL18_sf"/>
</dbReference>
<dbReference type="InterPro" id="IPR005749">
    <property type="entry name" value="Ribosomal_uL15_bac-type"/>
</dbReference>
<dbReference type="InterPro" id="IPR001196">
    <property type="entry name" value="Ribosomal_uL15_CS"/>
</dbReference>
<dbReference type="NCBIfam" id="TIGR01071">
    <property type="entry name" value="rplO_bact"/>
    <property type="match status" value="1"/>
</dbReference>
<dbReference type="PANTHER" id="PTHR12934">
    <property type="entry name" value="50S RIBOSOMAL PROTEIN L15"/>
    <property type="match status" value="1"/>
</dbReference>
<dbReference type="PANTHER" id="PTHR12934:SF11">
    <property type="entry name" value="LARGE RIBOSOMAL SUBUNIT PROTEIN UL15M"/>
    <property type="match status" value="1"/>
</dbReference>
<dbReference type="Pfam" id="PF00828">
    <property type="entry name" value="Ribosomal_L27A"/>
    <property type="match status" value="1"/>
</dbReference>
<dbReference type="SUPFAM" id="SSF52080">
    <property type="entry name" value="Ribosomal proteins L15p and L18e"/>
    <property type="match status" value="1"/>
</dbReference>
<dbReference type="PROSITE" id="PS00475">
    <property type="entry name" value="RIBOSOMAL_L15"/>
    <property type="match status" value="1"/>
</dbReference>
<feature type="chain" id="PRO_1000054428" description="Large ribosomal subunit protein uL15">
    <location>
        <begin position="1"/>
        <end position="154"/>
    </location>
</feature>
<feature type="region of interest" description="Disordered" evidence="2">
    <location>
        <begin position="1"/>
        <end position="44"/>
    </location>
</feature>
<feature type="compositionally biased region" description="Basic and acidic residues" evidence="2">
    <location>
        <begin position="1"/>
        <end position="13"/>
    </location>
</feature>
<feature type="compositionally biased region" description="Gly residues" evidence="2">
    <location>
        <begin position="21"/>
        <end position="35"/>
    </location>
</feature>
<evidence type="ECO:0000255" key="1">
    <source>
        <dbReference type="HAMAP-Rule" id="MF_01341"/>
    </source>
</evidence>
<evidence type="ECO:0000256" key="2">
    <source>
        <dbReference type="SAM" id="MobiDB-lite"/>
    </source>
</evidence>
<evidence type="ECO:0000305" key="3"/>
<comment type="function">
    <text evidence="1">Binds to the 23S rRNA.</text>
</comment>
<comment type="subunit">
    <text evidence="1">Part of the 50S ribosomal subunit.</text>
</comment>
<comment type="similarity">
    <text evidence="1">Belongs to the universal ribosomal protein uL15 family.</text>
</comment>
<protein>
    <recommendedName>
        <fullName evidence="1">Large ribosomal subunit protein uL15</fullName>
    </recommendedName>
    <alternativeName>
        <fullName evidence="3">50S ribosomal protein L15</fullName>
    </alternativeName>
</protein>
<organism>
    <name type="scientific">Bartonella bacilliformis (strain ATCC 35685 / KC583 / Herrer 020/F12,63)</name>
    <dbReference type="NCBI Taxonomy" id="360095"/>
    <lineage>
        <taxon>Bacteria</taxon>
        <taxon>Pseudomonadati</taxon>
        <taxon>Pseudomonadota</taxon>
        <taxon>Alphaproteobacteria</taxon>
        <taxon>Hyphomicrobiales</taxon>
        <taxon>Bartonellaceae</taxon>
        <taxon>Bartonella</taxon>
    </lineage>
</organism>
<sequence length="154" mass="16581">MKLNELRDHEGATKNRKRIGRGIGSGTGKTGGCGVKGQKSRSGVSLNGFEGGQMPIYRRLPKRGFKNLFAKTYNEVSLGRIQLAVDAGKLNIEKSVDVAALKDAGIIRRFKNGVRLLSDGELKSKIVFNISGASKVARTKIEKVGGQINVPESI</sequence>
<proteinExistence type="inferred from homology"/>
<gene>
    <name evidence="1" type="primary">rplO</name>
    <name type="ordered locus">BARBAKC583_0717</name>
</gene>
<accession>A1USR3</accession>
<keyword id="KW-0687">Ribonucleoprotein</keyword>
<keyword id="KW-0689">Ribosomal protein</keyword>
<keyword id="KW-0694">RNA-binding</keyword>
<keyword id="KW-0699">rRNA-binding</keyword>
<name>RL15_BARBK</name>